<accession>Q5LWJ6</accession>
<name>DNAK_RUEPO</name>
<organism>
    <name type="scientific">Ruegeria pomeroyi (strain ATCC 700808 / DSM 15171 / DSS-3)</name>
    <name type="common">Silicibacter pomeroyi</name>
    <dbReference type="NCBI Taxonomy" id="246200"/>
    <lineage>
        <taxon>Bacteria</taxon>
        <taxon>Pseudomonadati</taxon>
        <taxon>Pseudomonadota</taxon>
        <taxon>Alphaproteobacteria</taxon>
        <taxon>Rhodobacterales</taxon>
        <taxon>Roseobacteraceae</taxon>
        <taxon>Ruegeria</taxon>
    </lineage>
</organism>
<evidence type="ECO:0000255" key="1">
    <source>
        <dbReference type="HAMAP-Rule" id="MF_00332"/>
    </source>
</evidence>
<evidence type="ECO:0000256" key="2">
    <source>
        <dbReference type="SAM" id="MobiDB-lite"/>
    </source>
</evidence>
<protein>
    <recommendedName>
        <fullName evidence="1">Chaperone protein DnaK</fullName>
    </recommendedName>
    <alternativeName>
        <fullName evidence="1">HSP70</fullName>
    </alternativeName>
    <alternativeName>
        <fullName evidence="1">Heat shock 70 kDa protein</fullName>
    </alternativeName>
    <alternativeName>
        <fullName evidence="1">Heat shock protein 70</fullName>
    </alternativeName>
</protein>
<keyword id="KW-0067">ATP-binding</keyword>
<keyword id="KW-0143">Chaperone</keyword>
<keyword id="KW-0547">Nucleotide-binding</keyword>
<keyword id="KW-0597">Phosphoprotein</keyword>
<keyword id="KW-1185">Reference proteome</keyword>
<keyword id="KW-0346">Stress response</keyword>
<reference key="1">
    <citation type="journal article" date="2004" name="Nature">
        <title>Genome sequence of Silicibacter pomeroyi reveals adaptations to the marine environment.</title>
        <authorList>
            <person name="Moran M.A."/>
            <person name="Buchan A."/>
            <person name="Gonzalez J.M."/>
            <person name="Heidelberg J.F."/>
            <person name="Whitman W.B."/>
            <person name="Kiene R.P."/>
            <person name="Henriksen J.R."/>
            <person name="King G.M."/>
            <person name="Belas R."/>
            <person name="Fuqua C."/>
            <person name="Brinkac L.M."/>
            <person name="Lewis M."/>
            <person name="Johri S."/>
            <person name="Weaver B."/>
            <person name="Pai G."/>
            <person name="Eisen J.A."/>
            <person name="Rahe E."/>
            <person name="Sheldon W.M."/>
            <person name="Ye W."/>
            <person name="Miller T.R."/>
            <person name="Carlton J."/>
            <person name="Rasko D.A."/>
            <person name="Paulsen I.T."/>
            <person name="Ren Q."/>
            <person name="Daugherty S.C."/>
            <person name="DeBoy R.T."/>
            <person name="Dodson R.J."/>
            <person name="Durkin A.S."/>
            <person name="Madupu R."/>
            <person name="Nelson W.C."/>
            <person name="Sullivan S.A."/>
            <person name="Rosovitz M.J."/>
            <person name="Haft D.H."/>
            <person name="Selengut J."/>
            <person name="Ward N."/>
        </authorList>
    </citation>
    <scope>NUCLEOTIDE SEQUENCE [LARGE SCALE GENOMIC DNA]</scope>
    <source>
        <strain>ATCC 700808 / DSM 15171 / DSS-3</strain>
    </source>
</reference>
<reference key="2">
    <citation type="journal article" date="2014" name="Stand. Genomic Sci.">
        <title>An updated genome annotation for the model marine bacterium Ruegeria pomeroyi DSS-3.</title>
        <authorList>
            <person name="Rivers A.R."/>
            <person name="Smith C.B."/>
            <person name="Moran M.A."/>
        </authorList>
    </citation>
    <scope>GENOME REANNOTATION</scope>
    <source>
        <strain>ATCC 700808 / DSM 15171 / DSS-3</strain>
    </source>
</reference>
<comment type="function">
    <text evidence="1">Acts as a chaperone.</text>
</comment>
<comment type="induction">
    <text evidence="1">By stress conditions e.g. heat shock.</text>
</comment>
<comment type="similarity">
    <text evidence="1">Belongs to the heat shock protein 70 family.</text>
</comment>
<proteinExistence type="inferred from homology"/>
<feature type="chain" id="PRO_0000226011" description="Chaperone protein DnaK">
    <location>
        <begin position="1"/>
        <end position="637"/>
    </location>
</feature>
<feature type="region of interest" description="Disordered" evidence="2">
    <location>
        <begin position="600"/>
        <end position="637"/>
    </location>
</feature>
<feature type="compositionally biased region" description="Acidic residues" evidence="2">
    <location>
        <begin position="621"/>
        <end position="637"/>
    </location>
</feature>
<feature type="modified residue" description="Phosphothreonine; by autocatalysis" evidence="1">
    <location>
        <position position="197"/>
    </location>
</feature>
<gene>
    <name evidence="1" type="primary">dnaK</name>
    <name type="ordered locus">SPO0043</name>
</gene>
<sequence length="637" mass="68438">MGKVIGIDLGTTNSCVAIMDGAQPKVIENSEGARTTPSIVAFTDEERLVGQPAKRQAVTNPSNTIFGVKRLIGRRVDDAEVTKDKKMVPFTIVNGGNGDAWVEAKGEKYSPSQISAVILGKMKETAESYLGEEVTQAVITVPAYFNDAQRQATKDAGKIAGLEVLRIINEPTAAALAYGLDKKNSQTIAVYDLGGGTFDVTILEIDDGLFEVKSTNGDTFLGGEDFDMRIVNYLADEFKKEHGVDLSGDKMALQRLKEAAEKAKIELSSTTQTEINQPFISMGANGQPLHLVMKLTRAKLESLVGDLIKKSMDPCKAALKDAGISPSDVDEVVLVGGMTRMPKVFEEVTKFFGKEPHKGVNPDEVVAMGAAIQAGVLQGDVKDVVLLDVTPLSLGIETLGGVFTRLIDRNTTIPTKKSQVFSTAEDNQNAVTIRVFQGEREMAADNKILGQFNLEDIPPAPRGMPQIEVTFDIDANGIVSVSAKDKGTGKEHKITIQASGGLSDEDIEKMVKDAEENAEADKARKELVEARNQAESLIHSTEKSVEEHGDKVDPTTVEAIELAIAALKDDLDKDGVSAEKIKSGLQNVTEAAMKLGEAIYKAQSEGGDDEPAAADARPSDDDIVDAEFEDLGEDKRK</sequence>
<dbReference type="EMBL" id="CP000031">
    <property type="protein sequence ID" value="AAV93374.1"/>
    <property type="molecule type" value="Genomic_DNA"/>
</dbReference>
<dbReference type="RefSeq" id="WP_011045815.1">
    <property type="nucleotide sequence ID" value="NC_003911.12"/>
</dbReference>
<dbReference type="SMR" id="Q5LWJ6"/>
<dbReference type="STRING" id="246200.SPO0043"/>
<dbReference type="PaxDb" id="246200-SPO0043"/>
<dbReference type="KEGG" id="sil:SPO0043"/>
<dbReference type="eggNOG" id="COG0443">
    <property type="taxonomic scope" value="Bacteria"/>
</dbReference>
<dbReference type="HOGENOM" id="CLU_005965_2_1_5"/>
<dbReference type="OrthoDB" id="9766019at2"/>
<dbReference type="Proteomes" id="UP000001023">
    <property type="component" value="Chromosome"/>
</dbReference>
<dbReference type="GO" id="GO:0005524">
    <property type="term" value="F:ATP binding"/>
    <property type="evidence" value="ECO:0007669"/>
    <property type="project" value="UniProtKB-UniRule"/>
</dbReference>
<dbReference type="GO" id="GO:0140662">
    <property type="term" value="F:ATP-dependent protein folding chaperone"/>
    <property type="evidence" value="ECO:0007669"/>
    <property type="project" value="InterPro"/>
</dbReference>
<dbReference type="GO" id="GO:0051082">
    <property type="term" value="F:unfolded protein binding"/>
    <property type="evidence" value="ECO:0007669"/>
    <property type="project" value="InterPro"/>
</dbReference>
<dbReference type="CDD" id="cd11733">
    <property type="entry name" value="ASKHA_NBD_HSP70_HSPA9"/>
    <property type="match status" value="1"/>
</dbReference>
<dbReference type="FunFam" id="2.60.34.10:FF:000014">
    <property type="entry name" value="Chaperone protein DnaK HSP70"/>
    <property type="match status" value="1"/>
</dbReference>
<dbReference type="FunFam" id="3.30.30.30:FF:000003">
    <property type="entry name" value="Heat shock protein 9"/>
    <property type="match status" value="1"/>
</dbReference>
<dbReference type="FunFam" id="1.20.1270.10:FF:000001">
    <property type="entry name" value="Molecular chaperone DnaK"/>
    <property type="match status" value="1"/>
</dbReference>
<dbReference type="FunFam" id="3.30.420.40:FF:000004">
    <property type="entry name" value="Molecular chaperone DnaK"/>
    <property type="match status" value="1"/>
</dbReference>
<dbReference type="FunFam" id="3.90.640.10:FF:000003">
    <property type="entry name" value="Molecular chaperone DnaK"/>
    <property type="match status" value="1"/>
</dbReference>
<dbReference type="Gene3D" id="1.20.1270.10">
    <property type="match status" value="1"/>
</dbReference>
<dbReference type="Gene3D" id="3.30.420.40">
    <property type="match status" value="2"/>
</dbReference>
<dbReference type="Gene3D" id="3.90.640.10">
    <property type="entry name" value="Actin, Chain A, domain 4"/>
    <property type="match status" value="1"/>
</dbReference>
<dbReference type="Gene3D" id="2.60.34.10">
    <property type="entry name" value="Substrate Binding Domain Of DNAk, Chain A, domain 1"/>
    <property type="match status" value="1"/>
</dbReference>
<dbReference type="HAMAP" id="MF_00332">
    <property type="entry name" value="DnaK"/>
    <property type="match status" value="1"/>
</dbReference>
<dbReference type="InterPro" id="IPR043129">
    <property type="entry name" value="ATPase_NBD"/>
</dbReference>
<dbReference type="InterPro" id="IPR012725">
    <property type="entry name" value="Chaperone_DnaK"/>
</dbReference>
<dbReference type="InterPro" id="IPR018181">
    <property type="entry name" value="Heat_shock_70_CS"/>
</dbReference>
<dbReference type="InterPro" id="IPR029048">
    <property type="entry name" value="HSP70_C_sf"/>
</dbReference>
<dbReference type="InterPro" id="IPR029047">
    <property type="entry name" value="HSP70_peptide-bd_sf"/>
</dbReference>
<dbReference type="InterPro" id="IPR013126">
    <property type="entry name" value="Hsp_70_fam"/>
</dbReference>
<dbReference type="NCBIfam" id="NF001413">
    <property type="entry name" value="PRK00290.1"/>
    <property type="match status" value="1"/>
</dbReference>
<dbReference type="NCBIfam" id="NF003520">
    <property type="entry name" value="PRK05183.1"/>
    <property type="match status" value="1"/>
</dbReference>
<dbReference type="NCBIfam" id="TIGR02350">
    <property type="entry name" value="prok_dnaK"/>
    <property type="match status" value="1"/>
</dbReference>
<dbReference type="PANTHER" id="PTHR19375">
    <property type="entry name" value="HEAT SHOCK PROTEIN 70KDA"/>
    <property type="match status" value="1"/>
</dbReference>
<dbReference type="Pfam" id="PF00012">
    <property type="entry name" value="HSP70"/>
    <property type="match status" value="1"/>
</dbReference>
<dbReference type="PRINTS" id="PR00301">
    <property type="entry name" value="HEATSHOCK70"/>
</dbReference>
<dbReference type="SUPFAM" id="SSF53067">
    <property type="entry name" value="Actin-like ATPase domain"/>
    <property type="match status" value="2"/>
</dbReference>
<dbReference type="SUPFAM" id="SSF100920">
    <property type="entry name" value="Heat shock protein 70kD (HSP70), peptide-binding domain"/>
    <property type="match status" value="1"/>
</dbReference>
<dbReference type="PROSITE" id="PS00297">
    <property type="entry name" value="HSP70_1"/>
    <property type="match status" value="1"/>
</dbReference>
<dbReference type="PROSITE" id="PS00329">
    <property type="entry name" value="HSP70_2"/>
    <property type="match status" value="1"/>
</dbReference>
<dbReference type="PROSITE" id="PS01036">
    <property type="entry name" value="HSP70_3"/>
    <property type="match status" value="1"/>
</dbReference>